<comment type="function">
    <text evidence="1">One of the essential components for the initiation of protein synthesis. Stabilizes the binding of IF-2 and IF-3 on the 30S subunit to which N-formylmethionyl-tRNA(fMet) subsequently binds. Helps modulate mRNA selection, yielding the 30S pre-initiation complex (PIC). Upon addition of the 50S ribosomal subunit IF-1, IF-2 and IF-3 are released leaving the mature 70S translation initiation complex.</text>
</comment>
<comment type="subunit">
    <text evidence="1">Component of the 30S ribosomal translation pre-initiation complex which assembles on the 30S ribosome in the order IF-2 and IF-3, IF-1 and N-formylmethionyl-tRNA(fMet); mRNA recruitment can occur at any time during PIC assembly.</text>
</comment>
<comment type="subcellular location">
    <subcellularLocation>
        <location evidence="1">Cytoplasm</location>
    </subcellularLocation>
</comment>
<comment type="similarity">
    <text evidence="1">Belongs to the IF-1 family.</text>
</comment>
<accession>A1B2Z3</accession>
<protein>
    <recommendedName>
        <fullName evidence="1">Translation initiation factor IF-1</fullName>
    </recommendedName>
</protein>
<sequence>MAKEEMLEFPGVVKELLPNATFRVELENGHEIIAHMAGKMRKNRIRVLAGDKVQVEMNTYDLTKGRINYRFK</sequence>
<name>IF1_PARDP</name>
<evidence type="ECO:0000255" key="1">
    <source>
        <dbReference type="HAMAP-Rule" id="MF_00075"/>
    </source>
</evidence>
<gene>
    <name evidence="1" type="primary">infA</name>
    <name type="ordered locus">Pden_1790</name>
</gene>
<proteinExistence type="inferred from homology"/>
<feature type="chain" id="PRO_0000338877" description="Translation initiation factor IF-1">
    <location>
        <begin position="1"/>
        <end position="72"/>
    </location>
</feature>
<feature type="domain" description="S1-like" evidence="1">
    <location>
        <begin position="1"/>
        <end position="72"/>
    </location>
</feature>
<reference key="1">
    <citation type="submission" date="2006-12" db="EMBL/GenBank/DDBJ databases">
        <title>Complete sequence of chromosome 1 of Paracoccus denitrificans PD1222.</title>
        <authorList>
            <person name="Copeland A."/>
            <person name="Lucas S."/>
            <person name="Lapidus A."/>
            <person name="Barry K."/>
            <person name="Detter J.C."/>
            <person name="Glavina del Rio T."/>
            <person name="Hammon N."/>
            <person name="Israni S."/>
            <person name="Dalin E."/>
            <person name="Tice H."/>
            <person name="Pitluck S."/>
            <person name="Munk A.C."/>
            <person name="Brettin T."/>
            <person name="Bruce D."/>
            <person name="Han C."/>
            <person name="Tapia R."/>
            <person name="Gilna P."/>
            <person name="Schmutz J."/>
            <person name="Larimer F."/>
            <person name="Land M."/>
            <person name="Hauser L."/>
            <person name="Kyrpides N."/>
            <person name="Lykidis A."/>
            <person name="Spiro S."/>
            <person name="Richardson D.J."/>
            <person name="Moir J.W.B."/>
            <person name="Ferguson S.J."/>
            <person name="van Spanning R.J.M."/>
            <person name="Richardson P."/>
        </authorList>
    </citation>
    <scope>NUCLEOTIDE SEQUENCE [LARGE SCALE GENOMIC DNA]</scope>
    <source>
        <strain>Pd 1222</strain>
    </source>
</reference>
<dbReference type="EMBL" id="CP000489">
    <property type="protein sequence ID" value="ABL69887.1"/>
    <property type="molecule type" value="Genomic_DNA"/>
</dbReference>
<dbReference type="RefSeq" id="WP_010397442.1">
    <property type="nucleotide sequence ID" value="NC_008686.1"/>
</dbReference>
<dbReference type="SMR" id="A1B2Z3"/>
<dbReference type="STRING" id="318586.Pden_1790"/>
<dbReference type="EnsemblBacteria" id="ABL69887">
    <property type="protein sequence ID" value="ABL69887"/>
    <property type="gene ID" value="Pden_1790"/>
</dbReference>
<dbReference type="GeneID" id="97047439"/>
<dbReference type="KEGG" id="pde:Pden_1790"/>
<dbReference type="eggNOG" id="COG0361">
    <property type="taxonomic scope" value="Bacteria"/>
</dbReference>
<dbReference type="HOGENOM" id="CLU_151267_1_0_5"/>
<dbReference type="OrthoDB" id="9803250at2"/>
<dbReference type="Proteomes" id="UP000000361">
    <property type="component" value="Chromosome 1"/>
</dbReference>
<dbReference type="GO" id="GO:0005829">
    <property type="term" value="C:cytosol"/>
    <property type="evidence" value="ECO:0007669"/>
    <property type="project" value="TreeGrafter"/>
</dbReference>
<dbReference type="GO" id="GO:0043022">
    <property type="term" value="F:ribosome binding"/>
    <property type="evidence" value="ECO:0007669"/>
    <property type="project" value="UniProtKB-UniRule"/>
</dbReference>
<dbReference type="GO" id="GO:0019843">
    <property type="term" value="F:rRNA binding"/>
    <property type="evidence" value="ECO:0007669"/>
    <property type="project" value="UniProtKB-UniRule"/>
</dbReference>
<dbReference type="GO" id="GO:0003743">
    <property type="term" value="F:translation initiation factor activity"/>
    <property type="evidence" value="ECO:0007669"/>
    <property type="project" value="UniProtKB-UniRule"/>
</dbReference>
<dbReference type="CDD" id="cd04451">
    <property type="entry name" value="S1_IF1"/>
    <property type="match status" value="1"/>
</dbReference>
<dbReference type="FunFam" id="2.40.50.140:FF:000002">
    <property type="entry name" value="Translation initiation factor IF-1"/>
    <property type="match status" value="1"/>
</dbReference>
<dbReference type="Gene3D" id="2.40.50.140">
    <property type="entry name" value="Nucleic acid-binding proteins"/>
    <property type="match status" value="1"/>
</dbReference>
<dbReference type="HAMAP" id="MF_00075">
    <property type="entry name" value="IF_1"/>
    <property type="match status" value="1"/>
</dbReference>
<dbReference type="InterPro" id="IPR012340">
    <property type="entry name" value="NA-bd_OB-fold"/>
</dbReference>
<dbReference type="InterPro" id="IPR006196">
    <property type="entry name" value="RNA-binding_domain_S1_IF1"/>
</dbReference>
<dbReference type="InterPro" id="IPR004368">
    <property type="entry name" value="TIF_IF1"/>
</dbReference>
<dbReference type="NCBIfam" id="TIGR00008">
    <property type="entry name" value="infA"/>
    <property type="match status" value="1"/>
</dbReference>
<dbReference type="PANTHER" id="PTHR33370">
    <property type="entry name" value="TRANSLATION INITIATION FACTOR IF-1, CHLOROPLASTIC"/>
    <property type="match status" value="1"/>
</dbReference>
<dbReference type="PANTHER" id="PTHR33370:SF1">
    <property type="entry name" value="TRANSLATION INITIATION FACTOR IF-1, CHLOROPLASTIC"/>
    <property type="match status" value="1"/>
</dbReference>
<dbReference type="Pfam" id="PF01176">
    <property type="entry name" value="eIF-1a"/>
    <property type="match status" value="1"/>
</dbReference>
<dbReference type="SUPFAM" id="SSF50249">
    <property type="entry name" value="Nucleic acid-binding proteins"/>
    <property type="match status" value="1"/>
</dbReference>
<dbReference type="PROSITE" id="PS50832">
    <property type="entry name" value="S1_IF1_TYPE"/>
    <property type="match status" value="1"/>
</dbReference>
<organism>
    <name type="scientific">Paracoccus denitrificans (strain Pd 1222)</name>
    <dbReference type="NCBI Taxonomy" id="318586"/>
    <lineage>
        <taxon>Bacteria</taxon>
        <taxon>Pseudomonadati</taxon>
        <taxon>Pseudomonadota</taxon>
        <taxon>Alphaproteobacteria</taxon>
        <taxon>Rhodobacterales</taxon>
        <taxon>Paracoccaceae</taxon>
        <taxon>Paracoccus</taxon>
    </lineage>
</organism>
<keyword id="KW-0963">Cytoplasm</keyword>
<keyword id="KW-0396">Initiation factor</keyword>
<keyword id="KW-0648">Protein biosynthesis</keyword>
<keyword id="KW-1185">Reference proteome</keyword>
<keyword id="KW-0694">RNA-binding</keyword>
<keyword id="KW-0699">rRNA-binding</keyword>